<name>PSTB_CHLTE</name>
<accession>Q8KDZ5</accession>
<dbReference type="EC" id="7.3.2.1" evidence="1"/>
<dbReference type="EMBL" id="AE006470">
    <property type="protein sequence ID" value="AAM72134.1"/>
    <property type="molecule type" value="Genomic_DNA"/>
</dbReference>
<dbReference type="RefSeq" id="NP_661792.1">
    <property type="nucleotide sequence ID" value="NC_002932.3"/>
</dbReference>
<dbReference type="RefSeq" id="WP_010932579.1">
    <property type="nucleotide sequence ID" value="NC_002932.3"/>
</dbReference>
<dbReference type="SMR" id="Q8KDZ5"/>
<dbReference type="STRING" id="194439.CT0899"/>
<dbReference type="EnsemblBacteria" id="AAM72134">
    <property type="protein sequence ID" value="AAM72134"/>
    <property type="gene ID" value="CT0899"/>
</dbReference>
<dbReference type="KEGG" id="cte:CT0899"/>
<dbReference type="PATRIC" id="fig|194439.7.peg.813"/>
<dbReference type="eggNOG" id="COG1117">
    <property type="taxonomic scope" value="Bacteria"/>
</dbReference>
<dbReference type="HOGENOM" id="CLU_000604_1_22_10"/>
<dbReference type="OrthoDB" id="594396at2"/>
<dbReference type="Proteomes" id="UP000001007">
    <property type="component" value="Chromosome"/>
</dbReference>
<dbReference type="GO" id="GO:0005886">
    <property type="term" value="C:plasma membrane"/>
    <property type="evidence" value="ECO:0007669"/>
    <property type="project" value="UniProtKB-SubCell"/>
</dbReference>
<dbReference type="GO" id="GO:0005524">
    <property type="term" value="F:ATP binding"/>
    <property type="evidence" value="ECO:0007669"/>
    <property type="project" value="UniProtKB-KW"/>
</dbReference>
<dbReference type="GO" id="GO:0016887">
    <property type="term" value="F:ATP hydrolysis activity"/>
    <property type="evidence" value="ECO:0007669"/>
    <property type="project" value="InterPro"/>
</dbReference>
<dbReference type="GO" id="GO:0015415">
    <property type="term" value="F:ATPase-coupled phosphate ion transmembrane transporter activity"/>
    <property type="evidence" value="ECO:0007669"/>
    <property type="project" value="UniProtKB-EC"/>
</dbReference>
<dbReference type="GO" id="GO:0035435">
    <property type="term" value="P:phosphate ion transmembrane transport"/>
    <property type="evidence" value="ECO:0007669"/>
    <property type="project" value="InterPro"/>
</dbReference>
<dbReference type="CDD" id="cd03260">
    <property type="entry name" value="ABC_PstB_phosphate_transporter"/>
    <property type="match status" value="1"/>
</dbReference>
<dbReference type="Gene3D" id="3.40.50.300">
    <property type="entry name" value="P-loop containing nucleotide triphosphate hydrolases"/>
    <property type="match status" value="1"/>
</dbReference>
<dbReference type="InterPro" id="IPR003593">
    <property type="entry name" value="AAA+_ATPase"/>
</dbReference>
<dbReference type="InterPro" id="IPR003439">
    <property type="entry name" value="ABC_transporter-like_ATP-bd"/>
</dbReference>
<dbReference type="InterPro" id="IPR017871">
    <property type="entry name" value="ABC_transporter-like_CS"/>
</dbReference>
<dbReference type="InterPro" id="IPR027417">
    <property type="entry name" value="P-loop_NTPase"/>
</dbReference>
<dbReference type="InterPro" id="IPR005670">
    <property type="entry name" value="PstB-like"/>
</dbReference>
<dbReference type="NCBIfam" id="TIGR00972">
    <property type="entry name" value="3a0107s01c2"/>
    <property type="match status" value="1"/>
</dbReference>
<dbReference type="PANTHER" id="PTHR43423">
    <property type="entry name" value="ABC TRANSPORTER I FAMILY MEMBER 17"/>
    <property type="match status" value="1"/>
</dbReference>
<dbReference type="PANTHER" id="PTHR43423:SF1">
    <property type="entry name" value="ABC TRANSPORTER I FAMILY MEMBER 17"/>
    <property type="match status" value="1"/>
</dbReference>
<dbReference type="Pfam" id="PF00005">
    <property type="entry name" value="ABC_tran"/>
    <property type="match status" value="1"/>
</dbReference>
<dbReference type="SMART" id="SM00382">
    <property type="entry name" value="AAA"/>
    <property type="match status" value="1"/>
</dbReference>
<dbReference type="SUPFAM" id="SSF52540">
    <property type="entry name" value="P-loop containing nucleoside triphosphate hydrolases"/>
    <property type="match status" value="1"/>
</dbReference>
<dbReference type="PROSITE" id="PS00211">
    <property type="entry name" value="ABC_TRANSPORTER_1"/>
    <property type="match status" value="1"/>
</dbReference>
<dbReference type="PROSITE" id="PS50893">
    <property type="entry name" value="ABC_TRANSPORTER_2"/>
    <property type="match status" value="1"/>
</dbReference>
<dbReference type="PROSITE" id="PS51238">
    <property type="entry name" value="PSTB"/>
    <property type="match status" value="1"/>
</dbReference>
<evidence type="ECO:0000255" key="1">
    <source>
        <dbReference type="HAMAP-Rule" id="MF_01702"/>
    </source>
</evidence>
<keyword id="KW-0067">ATP-binding</keyword>
<keyword id="KW-0997">Cell inner membrane</keyword>
<keyword id="KW-1003">Cell membrane</keyword>
<keyword id="KW-0472">Membrane</keyword>
<keyword id="KW-0547">Nucleotide-binding</keyword>
<keyword id="KW-0592">Phosphate transport</keyword>
<keyword id="KW-1185">Reference proteome</keyword>
<keyword id="KW-1278">Translocase</keyword>
<keyword id="KW-0813">Transport</keyword>
<comment type="function">
    <text evidence="1">Part of the ABC transporter complex PstSACB involved in phosphate import. Responsible for energy coupling to the transport system.</text>
</comment>
<comment type="catalytic activity">
    <reaction evidence="1">
        <text>phosphate(out) + ATP + H2O = ADP + 2 phosphate(in) + H(+)</text>
        <dbReference type="Rhea" id="RHEA:24440"/>
        <dbReference type="ChEBI" id="CHEBI:15377"/>
        <dbReference type="ChEBI" id="CHEBI:15378"/>
        <dbReference type="ChEBI" id="CHEBI:30616"/>
        <dbReference type="ChEBI" id="CHEBI:43474"/>
        <dbReference type="ChEBI" id="CHEBI:456216"/>
        <dbReference type="EC" id="7.3.2.1"/>
    </reaction>
</comment>
<comment type="subunit">
    <text evidence="1">The complex is composed of two ATP-binding proteins (PstB), two transmembrane proteins (PstC and PstA) and a solute-binding protein (PstS).</text>
</comment>
<comment type="subcellular location">
    <subcellularLocation>
        <location evidence="1">Cell inner membrane</location>
        <topology evidence="1">Peripheral membrane protein</topology>
    </subcellularLocation>
</comment>
<comment type="similarity">
    <text evidence="1">Belongs to the ABC transporter superfamily. Phosphate importer (TC 3.A.1.7) family.</text>
</comment>
<proteinExistence type="inferred from homology"/>
<protein>
    <recommendedName>
        <fullName evidence="1">Phosphate import ATP-binding protein PstB</fullName>
        <ecNumber evidence="1">7.3.2.1</ecNumber>
    </recommendedName>
    <alternativeName>
        <fullName evidence="1">ABC phosphate transporter</fullName>
    </alternativeName>
    <alternativeName>
        <fullName evidence="1">Phosphate-transporting ATPase</fullName>
    </alternativeName>
</protein>
<sequence length="286" mass="31932">MQMTAEEKQTSAKIPAERSTCDIYIPPERKAIAGGGKPHVVARDFSIYYGEFEAVKKVNAEILSKYVTAIIGPSGCGKSTFLRAINRMNDLIPNCHTTGALMFDGEDIYGKFTDEVLLRKKIGMVFQKPNPFPKSIFDNIAYGPKLHGIKDKKKLSEIVEKSLRKAALWDEVSDRLDKNALGLSGGQQQRLCVARALAVEPEILLLDEPTSALDPKATAKIEDLIQELRGSYTIMIVTHNMQQASRVSDYTMFFYEGVLVEHAPTTQLFTRPKDSMTEDYITGRFS</sequence>
<feature type="chain" id="PRO_0000092800" description="Phosphate import ATP-binding protein PstB">
    <location>
        <begin position="1"/>
        <end position="286"/>
    </location>
</feature>
<feature type="domain" description="ABC transporter" evidence="1">
    <location>
        <begin position="40"/>
        <end position="281"/>
    </location>
</feature>
<feature type="binding site" evidence="1">
    <location>
        <begin position="72"/>
        <end position="79"/>
    </location>
    <ligand>
        <name>ATP</name>
        <dbReference type="ChEBI" id="CHEBI:30616"/>
    </ligand>
</feature>
<organism>
    <name type="scientific">Chlorobaculum tepidum (strain ATCC 49652 / DSM 12025 / NBRC 103806 / TLS)</name>
    <name type="common">Chlorobium tepidum</name>
    <dbReference type="NCBI Taxonomy" id="194439"/>
    <lineage>
        <taxon>Bacteria</taxon>
        <taxon>Pseudomonadati</taxon>
        <taxon>Chlorobiota</taxon>
        <taxon>Chlorobiia</taxon>
        <taxon>Chlorobiales</taxon>
        <taxon>Chlorobiaceae</taxon>
        <taxon>Chlorobaculum</taxon>
    </lineage>
</organism>
<reference key="1">
    <citation type="journal article" date="2002" name="Proc. Natl. Acad. Sci. U.S.A.">
        <title>The complete genome sequence of Chlorobium tepidum TLS, a photosynthetic, anaerobic, green-sulfur bacterium.</title>
        <authorList>
            <person name="Eisen J.A."/>
            <person name="Nelson K.E."/>
            <person name="Paulsen I.T."/>
            <person name="Heidelberg J.F."/>
            <person name="Wu M."/>
            <person name="Dodson R.J."/>
            <person name="DeBoy R.T."/>
            <person name="Gwinn M.L."/>
            <person name="Nelson W.C."/>
            <person name="Haft D.H."/>
            <person name="Hickey E.K."/>
            <person name="Peterson J.D."/>
            <person name="Durkin A.S."/>
            <person name="Kolonay J.F."/>
            <person name="Yang F."/>
            <person name="Holt I.E."/>
            <person name="Umayam L.A."/>
            <person name="Mason T.M."/>
            <person name="Brenner M."/>
            <person name="Shea T.P."/>
            <person name="Parksey D.S."/>
            <person name="Nierman W.C."/>
            <person name="Feldblyum T.V."/>
            <person name="Hansen C.L."/>
            <person name="Craven M.B."/>
            <person name="Radune D."/>
            <person name="Vamathevan J.J."/>
            <person name="Khouri H.M."/>
            <person name="White O."/>
            <person name="Gruber T.M."/>
            <person name="Ketchum K.A."/>
            <person name="Venter J.C."/>
            <person name="Tettelin H."/>
            <person name="Bryant D.A."/>
            <person name="Fraser C.M."/>
        </authorList>
    </citation>
    <scope>NUCLEOTIDE SEQUENCE [LARGE SCALE GENOMIC DNA]</scope>
    <source>
        <strain>ATCC 49652 / DSM 12025 / NBRC 103806 / TLS</strain>
    </source>
</reference>
<gene>
    <name evidence="1" type="primary">pstB</name>
    <name type="ordered locus">CT0899</name>
</gene>